<proteinExistence type="evidence at protein level"/>
<protein>
    <recommendedName>
        <fullName>Bindin</fullName>
    </recommendedName>
</protein>
<organism>
    <name type="scientific">Mesocentrotus franciscanus</name>
    <name type="common">Giant red sea urchin</name>
    <name type="synonym">Strongylocentrotus franciscanus</name>
    <dbReference type="NCBI Taxonomy" id="1328066"/>
    <lineage>
        <taxon>Eukaryota</taxon>
        <taxon>Metazoa</taxon>
        <taxon>Echinodermata</taxon>
        <taxon>Eleutherozoa</taxon>
        <taxon>Echinozoa</taxon>
        <taxon>Echinoidea</taxon>
        <taxon>Euechinoidea</taxon>
        <taxon>Echinacea</taxon>
        <taxon>Camarodonta</taxon>
        <taxon>Echinidea</taxon>
        <taxon>Strongylocentrotidae</taxon>
        <taxon>Mesocentrotus</taxon>
    </lineage>
</organism>
<name>BIND_MESFR</name>
<dbReference type="EMBL" id="M59490">
    <property type="protein sequence ID" value="AAA30037.1"/>
    <property type="molecule type" value="mRNA"/>
</dbReference>
<dbReference type="PIR" id="B40552">
    <property type="entry name" value="B40552"/>
</dbReference>
<dbReference type="GO" id="GO:0043160">
    <property type="term" value="C:acrosomal lumen"/>
    <property type="evidence" value="ECO:0007669"/>
    <property type="project" value="UniProtKB-SubCell"/>
</dbReference>
<dbReference type="GO" id="GO:0007155">
    <property type="term" value="P:cell adhesion"/>
    <property type="evidence" value="ECO:0007669"/>
    <property type="project" value="UniProtKB-KW"/>
</dbReference>
<dbReference type="GO" id="GO:0007342">
    <property type="term" value="P:fusion of sperm to egg plasma membrane involved in single fertilization"/>
    <property type="evidence" value="ECO:0007669"/>
    <property type="project" value="InterPro"/>
</dbReference>
<dbReference type="InterPro" id="IPR000775">
    <property type="entry name" value="Bindin"/>
</dbReference>
<dbReference type="Pfam" id="PF02084">
    <property type="entry name" value="Bindin"/>
    <property type="match status" value="1"/>
</dbReference>
<dbReference type="PRINTS" id="PR00761">
    <property type="entry name" value="BINDIN"/>
</dbReference>
<accession>P23118</accession>
<reference key="1">
    <citation type="journal article" date="1991" name="Mol. Biol. Evol.">
        <title>Comparison of the bindin proteins of Strongylocentrotus franciscanus, S. purpuratus, and Lytechinus variegatus: sequences involved in the species specificity of fertilization.</title>
        <authorList>
            <person name="Minor J.E."/>
            <person name="Fromson D.R."/>
            <person name="Britten R.J."/>
            <person name="Davidson E.H."/>
        </authorList>
    </citation>
    <scope>NUCLEOTIDE SEQUENCE [MRNA]</scope>
</reference>
<reference key="2">
    <citation type="book" date="1978" name="Cell reproduction">
        <editorList>
            <person name="Dirksen E.R."/>
            <person name="Prescott D."/>
            <person name="Fox C.F."/>
        </editorList>
        <authorList>
            <person name="Vacquier V.D."/>
            <person name="Moy G.W."/>
        </authorList>
    </citation>
    <scope>PRELIMINARY PROTEIN SEQUENCE OF 248-320</scope>
</reference>
<evidence type="ECO:0000255" key="1"/>
<evidence type="ECO:0000256" key="2">
    <source>
        <dbReference type="SAM" id="MobiDB-lite"/>
    </source>
</evidence>
<evidence type="ECO:0000305" key="3"/>
<comment type="function">
    <text>Species-specific sea urchin sperm protein required for adhesion of sperm to the egg surface during fertilization. Bindin coats the acrosomal process after it is externalized by the acrosome reaction. It binds to sulfated, fucose-containing polysaccharides on the vitelline layer receptor proteoglycans which cover the egg plasma membrane.</text>
</comment>
<comment type="subcellular location">
    <subcellularLocation>
        <location>Cytoplasmic vesicle</location>
        <location>Secretory vesicle</location>
        <location>Acrosome lumen</location>
    </subcellularLocation>
</comment>
<comment type="similarity">
    <text evidence="3">Belongs to the bindin family.</text>
</comment>
<keyword id="KW-0130">Cell adhesion</keyword>
<keyword id="KW-0165">Cleavage on pair of basic residues</keyword>
<keyword id="KW-0968">Cytoplasmic vesicle</keyword>
<keyword id="KW-0903">Direct protein sequencing</keyword>
<keyword id="KW-0278">Fertilization</keyword>
<keyword id="KW-0732">Signal</keyword>
<feature type="signal peptide" evidence="1">
    <location>
        <begin position="1"/>
        <end position="20"/>
    </location>
</feature>
<feature type="propeptide" id="PRO_0000020813" evidence="1">
    <location>
        <begin position="21"/>
        <end position="247"/>
    </location>
</feature>
<feature type="chain" id="PRO_0000020814" description="Bindin">
    <location>
        <begin position="248"/>
        <end position="485"/>
    </location>
</feature>
<feature type="region of interest" description="Disordered" evidence="2">
    <location>
        <begin position="157"/>
        <end position="195"/>
    </location>
</feature>
<feature type="region of interest" description="Disordered" evidence="2">
    <location>
        <begin position="219"/>
        <end position="273"/>
    </location>
</feature>
<feature type="region of interest" description="Disordered" evidence="2">
    <location>
        <begin position="305"/>
        <end position="331"/>
    </location>
</feature>
<feature type="region of interest" description="Fucose-binding domain" evidence="1">
    <location>
        <begin position="371"/>
        <end position="379"/>
    </location>
</feature>
<feature type="region of interest" description="Disordered" evidence="2">
    <location>
        <begin position="459"/>
        <end position="485"/>
    </location>
</feature>
<feature type="compositionally biased region" description="Basic and acidic residues" evidence="2">
    <location>
        <begin position="172"/>
        <end position="192"/>
    </location>
</feature>
<feature type="compositionally biased region" description="Polar residues" evidence="2">
    <location>
        <begin position="250"/>
        <end position="264"/>
    </location>
</feature>
<feature type="compositionally biased region" description="Acidic residues" evidence="2">
    <location>
        <begin position="317"/>
        <end position="331"/>
    </location>
</feature>
<feature type="compositionally biased region" description="Low complexity" evidence="2">
    <location>
        <begin position="465"/>
        <end position="475"/>
    </location>
</feature>
<feature type="compositionally biased region" description="Polar residues" evidence="2">
    <location>
        <begin position="476"/>
        <end position="485"/>
    </location>
</feature>
<sequence>MGFHQISVIIVVLALASARAADEFPSHTDTPTDCPEADHGCWCHGSFAQCWRTYEDSRMTEEIGNRITQLELLYQPSEEVVTYIRRISALRELRISEDGMSLDCSCDVIYALDDKQVTLVNQAELTFGNCRERGWPRERMAARPFVHRCHVLRMQDGETRKRRGADDNDGDDVSKRASPRKGDEPAGHKLKDLAPQNTHHLVNIHDADKHPASEFVNFISGHRRSRRSTDDDAAVSDDSERGARKKRYGNQGNYPQAMNPQSRGVNYGQPAQQGYGAQGMGGAFGGGQGMGGAVRGGQGMGGAVGGGQFGAFSPGEAEADNADYDEYSDSLDEGDTTISAAVMDDIKAVLGATKIDLPVDINDPYDLGLLLRHLRHHSNLLANIGDPAVREQVLSAMQEEEEEEEEDAANGVRQNVLNNINANAPGNAGYGGQGGMGAFGGGGGGMGAIGGGGGAMMGQQGMGGVPQRMGGQPQGNAYNQGYRQG</sequence>